<comment type="function">
    <text evidence="1">Probable lysosomal cobalamin transporter. Required to export cobalamin from lysosomes allowing its conversion to cofactors (By similarity).</text>
</comment>
<comment type="subcellular location">
    <subcellularLocation>
        <location evidence="1">Lysosome membrane</location>
        <topology evidence="1">Multi-pass membrane protein</topology>
    </subcellularLocation>
</comment>
<comment type="similarity">
    <text evidence="4">Belongs to the LIMR family. LMBRD1 subfamily.</text>
</comment>
<comment type="sequence caution" evidence="4">
    <conflict type="erroneous gene model prediction">
        <sequence resource="EMBL-CDS" id="CBF84806"/>
    </conflict>
</comment>
<comment type="sequence caution" evidence="4">
    <conflict type="erroneous gene model prediction">
        <sequence resource="EMBL-CDS" id="EAA64542"/>
    </conflict>
</comment>
<name>LMBD1_EMENI</name>
<organism>
    <name type="scientific">Emericella nidulans (strain FGSC A4 / ATCC 38163 / CBS 112.46 / NRRL 194 / M139)</name>
    <name type="common">Aspergillus nidulans</name>
    <dbReference type="NCBI Taxonomy" id="227321"/>
    <lineage>
        <taxon>Eukaryota</taxon>
        <taxon>Fungi</taxon>
        <taxon>Dikarya</taxon>
        <taxon>Ascomycota</taxon>
        <taxon>Pezizomycotina</taxon>
        <taxon>Eurotiomycetes</taxon>
        <taxon>Eurotiomycetidae</taxon>
        <taxon>Eurotiales</taxon>
        <taxon>Aspergillaceae</taxon>
        <taxon>Aspergillus</taxon>
        <taxon>Aspergillus subgen. Nidulantes</taxon>
    </lineage>
</organism>
<gene>
    <name type="ORF">AN1412</name>
</gene>
<feature type="chain" id="PRO_0000365831" description="Probable lysosomal cobalamin transporter">
    <location>
        <begin position="1"/>
        <end position="575"/>
    </location>
</feature>
<feature type="transmembrane region" description="Helical" evidence="2">
    <location>
        <begin position="8"/>
        <end position="28"/>
    </location>
</feature>
<feature type="transmembrane region" description="Helical" evidence="2">
    <location>
        <begin position="46"/>
        <end position="66"/>
    </location>
</feature>
<feature type="transmembrane region" description="Helical" evidence="2">
    <location>
        <begin position="95"/>
        <end position="115"/>
    </location>
</feature>
<feature type="transmembrane region" description="Helical" evidence="2">
    <location>
        <begin position="144"/>
        <end position="164"/>
    </location>
</feature>
<feature type="transmembrane region" description="Helical" evidence="2">
    <location>
        <begin position="188"/>
        <end position="208"/>
    </location>
</feature>
<feature type="transmembrane region" description="Helical" evidence="2">
    <location>
        <begin position="314"/>
        <end position="334"/>
    </location>
</feature>
<feature type="transmembrane region" description="Helical" evidence="2">
    <location>
        <begin position="376"/>
        <end position="396"/>
    </location>
</feature>
<feature type="transmembrane region" description="Helical" evidence="2">
    <location>
        <begin position="420"/>
        <end position="440"/>
    </location>
</feature>
<feature type="transmembrane region" description="Helical" evidence="2">
    <location>
        <begin position="504"/>
        <end position="524"/>
    </location>
</feature>
<feature type="region of interest" description="Disordered" evidence="3">
    <location>
        <begin position="537"/>
        <end position="556"/>
    </location>
</feature>
<feature type="compositionally biased region" description="Acidic residues" evidence="3">
    <location>
        <begin position="537"/>
        <end position="549"/>
    </location>
</feature>
<feature type="glycosylation site" description="N-linked (GlcNAc...) asparagine" evidence="2">
    <location>
        <position position="233"/>
    </location>
</feature>
<proteinExistence type="inferred from homology"/>
<accession>Q5BDG8</accession>
<accession>C8VM25</accession>
<protein>
    <recommendedName>
        <fullName>Probable lysosomal cobalamin transporter</fullName>
    </recommendedName>
</protein>
<sequence length="575" mass="64190">MILLQTSLIWVVYAVVVVVLFAVASVFIYVYQSPRDRSPSVTLTCIVAITSLLATILLLPVDVALVSSTVSSSVGQRKDWATPEVVDRITFSLTLVYYILYSLDILLCLLVVPFVYFWYEEYDEVAAQTGEQSSGQRFWGASKYTLSFIAILIILFLVGVFVPISRANGGNGLDPFKSLLGENRGERALTFALGLLITIGMYVYALHTSTGLAVLPIRLIKGGPRLSNAGSWNATFTVQLDSNRERRRQLEGRCGGNFDHLSSKDRRELDALIREERTLIRRQRLAQEADGKGNALLPRMWFRLEAFFRPFRRLVGLILLLLVLLIWVSMILTASDKAKNSICKRHCGYVLGHINIFNPINEIFVQSAKLFPIDYAIFTMLVLLLFFGTVVGIATVGIRFLWISIFRIRLGHTSPQALLVMTAILMLSILALNYSISMIVAPQYATFGPQTFCDRLSGSSVLPELQCVVKRCSEAFGSDAAKKVCTPSVASTVLNRVTVSFPFFGAIFFWSQFAFIGVYLLALITSLLRSPKLDEQQLDEDAEEAEEEALLSGSRRNMDDRWQSIVGRASRSEDT</sequence>
<keyword id="KW-0846">Cobalamin</keyword>
<keyword id="KW-0170">Cobalt</keyword>
<keyword id="KW-0325">Glycoprotein</keyword>
<keyword id="KW-0458">Lysosome</keyword>
<keyword id="KW-0472">Membrane</keyword>
<keyword id="KW-1185">Reference proteome</keyword>
<keyword id="KW-0812">Transmembrane</keyword>
<keyword id="KW-1133">Transmembrane helix</keyword>
<keyword id="KW-0813">Transport</keyword>
<dbReference type="EMBL" id="AACD01000022">
    <property type="protein sequence ID" value="EAA64542.1"/>
    <property type="status" value="ALT_SEQ"/>
    <property type="molecule type" value="Genomic_DNA"/>
</dbReference>
<dbReference type="EMBL" id="BN001307">
    <property type="protein sequence ID" value="CBF84806.1"/>
    <property type="status" value="ALT_SEQ"/>
    <property type="molecule type" value="Genomic_DNA"/>
</dbReference>
<dbReference type="RefSeq" id="XP_659016.1">
    <property type="nucleotide sequence ID" value="XM_653924.1"/>
</dbReference>
<dbReference type="SMR" id="Q5BDG8"/>
<dbReference type="STRING" id="227321.Q5BDG8"/>
<dbReference type="VEuPathDB" id="FungiDB:AN1412"/>
<dbReference type="eggNOG" id="ENOG502QQ2T">
    <property type="taxonomic scope" value="Eukaryota"/>
</dbReference>
<dbReference type="HOGENOM" id="CLU_028341_1_0_1"/>
<dbReference type="InParanoid" id="Q5BDG8"/>
<dbReference type="Proteomes" id="UP000000560">
    <property type="component" value="Chromosome VII"/>
</dbReference>
<dbReference type="GO" id="GO:0005774">
    <property type="term" value="C:vacuolar membrane"/>
    <property type="evidence" value="ECO:0000318"/>
    <property type="project" value="GO_Central"/>
</dbReference>
<dbReference type="GO" id="GO:0031419">
    <property type="term" value="F:cobalamin binding"/>
    <property type="evidence" value="ECO:0007669"/>
    <property type="project" value="UniProtKB-KW"/>
</dbReference>
<dbReference type="GO" id="GO:0072665">
    <property type="term" value="P:protein localization to vacuole"/>
    <property type="evidence" value="ECO:0000318"/>
    <property type="project" value="GO_Central"/>
</dbReference>
<dbReference type="InterPro" id="IPR050854">
    <property type="entry name" value="LMBD1_LysCbl_Transport"/>
</dbReference>
<dbReference type="InterPro" id="IPR006876">
    <property type="entry name" value="LMBR1-like_membr_prot"/>
</dbReference>
<dbReference type="PANTHER" id="PTHR16130:SF2">
    <property type="entry name" value="LYSOSOMAL COBALAMIN TRANSPORT ESCORT PROTEIN LMBD1"/>
    <property type="match status" value="1"/>
</dbReference>
<dbReference type="PANTHER" id="PTHR16130">
    <property type="entry name" value="LYSOSOMAL COBALAMIN TRANSPORTER-RELATED"/>
    <property type="match status" value="1"/>
</dbReference>
<dbReference type="Pfam" id="PF04791">
    <property type="entry name" value="LMBR1"/>
    <property type="match status" value="1"/>
</dbReference>
<evidence type="ECO:0000250" key="1"/>
<evidence type="ECO:0000255" key="2"/>
<evidence type="ECO:0000256" key="3">
    <source>
        <dbReference type="SAM" id="MobiDB-lite"/>
    </source>
</evidence>
<evidence type="ECO:0000305" key="4"/>
<reference key="1">
    <citation type="journal article" date="2005" name="Nature">
        <title>Sequencing of Aspergillus nidulans and comparative analysis with A. fumigatus and A. oryzae.</title>
        <authorList>
            <person name="Galagan J.E."/>
            <person name="Calvo S.E."/>
            <person name="Cuomo C."/>
            <person name="Ma L.-J."/>
            <person name="Wortman J.R."/>
            <person name="Batzoglou S."/>
            <person name="Lee S.-I."/>
            <person name="Bastuerkmen M."/>
            <person name="Spevak C.C."/>
            <person name="Clutterbuck J."/>
            <person name="Kapitonov V."/>
            <person name="Jurka J."/>
            <person name="Scazzocchio C."/>
            <person name="Farman M.L."/>
            <person name="Butler J."/>
            <person name="Purcell S."/>
            <person name="Harris S."/>
            <person name="Braus G.H."/>
            <person name="Draht O."/>
            <person name="Busch S."/>
            <person name="D'Enfert C."/>
            <person name="Bouchier C."/>
            <person name="Goldman G.H."/>
            <person name="Bell-Pedersen D."/>
            <person name="Griffiths-Jones S."/>
            <person name="Doonan J.H."/>
            <person name="Yu J."/>
            <person name="Vienken K."/>
            <person name="Pain A."/>
            <person name="Freitag M."/>
            <person name="Selker E.U."/>
            <person name="Archer D.B."/>
            <person name="Penalva M.A."/>
            <person name="Oakley B.R."/>
            <person name="Momany M."/>
            <person name="Tanaka T."/>
            <person name="Kumagai T."/>
            <person name="Asai K."/>
            <person name="Machida M."/>
            <person name="Nierman W.C."/>
            <person name="Denning D.W."/>
            <person name="Caddick M.X."/>
            <person name="Hynes M."/>
            <person name="Paoletti M."/>
            <person name="Fischer R."/>
            <person name="Miller B.L."/>
            <person name="Dyer P.S."/>
            <person name="Sachs M.S."/>
            <person name="Osmani S.A."/>
            <person name="Birren B.W."/>
        </authorList>
    </citation>
    <scope>NUCLEOTIDE SEQUENCE [LARGE SCALE GENOMIC DNA]</scope>
    <source>
        <strain>FGSC A4 / ATCC 38163 / CBS 112.46 / NRRL 194 / M139</strain>
    </source>
</reference>
<reference key="2">
    <citation type="journal article" date="2009" name="Fungal Genet. Biol.">
        <title>The 2008 update of the Aspergillus nidulans genome annotation: a community effort.</title>
        <authorList>
            <person name="Wortman J.R."/>
            <person name="Gilsenan J.M."/>
            <person name="Joardar V."/>
            <person name="Deegan J."/>
            <person name="Clutterbuck J."/>
            <person name="Andersen M.R."/>
            <person name="Archer D."/>
            <person name="Bencina M."/>
            <person name="Braus G."/>
            <person name="Coutinho P."/>
            <person name="von Dohren H."/>
            <person name="Doonan J."/>
            <person name="Driessen A.J."/>
            <person name="Durek P."/>
            <person name="Espeso E."/>
            <person name="Fekete E."/>
            <person name="Flipphi M."/>
            <person name="Estrada C.G."/>
            <person name="Geysens S."/>
            <person name="Goldman G."/>
            <person name="de Groot P.W."/>
            <person name="Hansen K."/>
            <person name="Harris S.D."/>
            <person name="Heinekamp T."/>
            <person name="Helmstaedt K."/>
            <person name="Henrissat B."/>
            <person name="Hofmann G."/>
            <person name="Homan T."/>
            <person name="Horio T."/>
            <person name="Horiuchi H."/>
            <person name="James S."/>
            <person name="Jones M."/>
            <person name="Karaffa L."/>
            <person name="Karanyi Z."/>
            <person name="Kato M."/>
            <person name="Keller N."/>
            <person name="Kelly D.E."/>
            <person name="Kiel J.A."/>
            <person name="Kim J.M."/>
            <person name="van der Klei I.J."/>
            <person name="Klis F.M."/>
            <person name="Kovalchuk A."/>
            <person name="Krasevec N."/>
            <person name="Kubicek C.P."/>
            <person name="Liu B."/>
            <person name="Maccabe A."/>
            <person name="Meyer V."/>
            <person name="Mirabito P."/>
            <person name="Miskei M."/>
            <person name="Mos M."/>
            <person name="Mullins J."/>
            <person name="Nelson D.R."/>
            <person name="Nielsen J."/>
            <person name="Oakley B.R."/>
            <person name="Osmani S.A."/>
            <person name="Pakula T."/>
            <person name="Paszewski A."/>
            <person name="Paulsen I."/>
            <person name="Pilsyk S."/>
            <person name="Pocsi I."/>
            <person name="Punt P.J."/>
            <person name="Ram A.F."/>
            <person name="Ren Q."/>
            <person name="Robellet X."/>
            <person name="Robson G."/>
            <person name="Seiboth B."/>
            <person name="van Solingen P."/>
            <person name="Specht T."/>
            <person name="Sun J."/>
            <person name="Taheri-Talesh N."/>
            <person name="Takeshita N."/>
            <person name="Ussery D."/>
            <person name="vanKuyk P.A."/>
            <person name="Visser H."/>
            <person name="van de Vondervoort P.J."/>
            <person name="de Vries R.P."/>
            <person name="Walton J."/>
            <person name="Xiang X."/>
            <person name="Xiong Y."/>
            <person name="Zeng A.P."/>
            <person name="Brandt B.W."/>
            <person name="Cornell M.J."/>
            <person name="van den Hondel C.A."/>
            <person name="Visser J."/>
            <person name="Oliver S.G."/>
            <person name="Turner G."/>
        </authorList>
    </citation>
    <scope>GENOME REANNOTATION</scope>
    <source>
        <strain>FGSC A4 / ATCC 38163 / CBS 112.46 / NRRL 194 / M139</strain>
    </source>
</reference>